<keyword id="KW-0131">Cell cycle</keyword>
<keyword id="KW-0132">Cell division</keyword>
<keyword id="KW-0997">Cell inner membrane</keyword>
<keyword id="KW-1003">Cell membrane</keyword>
<keyword id="KW-0133">Cell shape</keyword>
<keyword id="KW-0961">Cell wall biogenesis/degradation</keyword>
<keyword id="KW-0328">Glycosyltransferase</keyword>
<keyword id="KW-0472">Membrane</keyword>
<keyword id="KW-0573">Peptidoglycan synthesis</keyword>
<keyword id="KW-0808">Transferase</keyword>
<accession>B5FB35</accession>
<sequence>MKNKNKRLLVMAGGTGGHVFPGLAVAKQLQSEGWEIRWLGTADRMEADLVPKHGIEIDFIKVKGLRGQGLKKLIAAPFQILGAISQAKKHIKAWQPDVVLGMGGYVSGPGGIAAWLSGIPVVLHEQNAVAGLTNQWLSKIAKRVFQAFPGAFPNAEVVGNPVREDVCQLPHPKERFAQRTGPIRLLVMGGSQGARILNTTLPEALPQLSHEIEIWHQAGKGSQETVEQAYRDNGIADAKVTEFIDNVAEAYAWADLLVCRSGALTVSEVSAAGVGSIFIPFMHKDRQQALNADHLVQCGAAQMIEQQDLTVQGLVDTLNGLERKQLLDMACNARDAAIIDADVRVANAIKSLAK</sequence>
<reference key="1">
    <citation type="submission" date="2008-08" db="EMBL/GenBank/DDBJ databases">
        <title>Complete sequence of Vibrio fischeri strain MJ11.</title>
        <authorList>
            <person name="Mandel M.J."/>
            <person name="Stabb E.V."/>
            <person name="Ruby E.G."/>
            <person name="Ferriera S."/>
            <person name="Johnson J."/>
            <person name="Kravitz S."/>
            <person name="Beeson K."/>
            <person name="Sutton G."/>
            <person name="Rogers Y.-H."/>
            <person name="Friedman R."/>
            <person name="Frazier M."/>
            <person name="Venter J.C."/>
        </authorList>
    </citation>
    <scope>NUCLEOTIDE SEQUENCE [LARGE SCALE GENOMIC DNA]</scope>
    <source>
        <strain>MJ11</strain>
    </source>
</reference>
<organism>
    <name type="scientific">Aliivibrio fischeri (strain MJ11)</name>
    <name type="common">Vibrio fischeri</name>
    <dbReference type="NCBI Taxonomy" id="388396"/>
    <lineage>
        <taxon>Bacteria</taxon>
        <taxon>Pseudomonadati</taxon>
        <taxon>Pseudomonadota</taxon>
        <taxon>Gammaproteobacteria</taxon>
        <taxon>Vibrionales</taxon>
        <taxon>Vibrionaceae</taxon>
        <taxon>Aliivibrio</taxon>
    </lineage>
</organism>
<comment type="function">
    <text evidence="1">Cell wall formation. Catalyzes the transfer of a GlcNAc subunit on undecaprenyl-pyrophosphoryl-MurNAc-pentapeptide (lipid intermediate I) to form undecaprenyl-pyrophosphoryl-MurNAc-(pentapeptide)GlcNAc (lipid intermediate II).</text>
</comment>
<comment type="catalytic activity">
    <reaction evidence="1">
        <text>di-trans,octa-cis-undecaprenyl diphospho-N-acetyl-alpha-D-muramoyl-L-alanyl-D-glutamyl-meso-2,6-diaminopimeloyl-D-alanyl-D-alanine + UDP-N-acetyl-alpha-D-glucosamine = di-trans,octa-cis-undecaprenyl diphospho-[N-acetyl-alpha-D-glucosaminyl-(1-&gt;4)]-N-acetyl-alpha-D-muramoyl-L-alanyl-D-glutamyl-meso-2,6-diaminopimeloyl-D-alanyl-D-alanine + UDP + H(+)</text>
        <dbReference type="Rhea" id="RHEA:31227"/>
        <dbReference type="ChEBI" id="CHEBI:15378"/>
        <dbReference type="ChEBI" id="CHEBI:57705"/>
        <dbReference type="ChEBI" id="CHEBI:58223"/>
        <dbReference type="ChEBI" id="CHEBI:61387"/>
        <dbReference type="ChEBI" id="CHEBI:61388"/>
        <dbReference type="EC" id="2.4.1.227"/>
    </reaction>
</comment>
<comment type="pathway">
    <text evidence="1">Cell wall biogenesis; peptidoglycan biosynthesis.</text>
</comment>
<comment type="subcellular location">
    <subcellularLocation>
        <location evidence="1">Cell inner membrane</location>
        <topology evidence="1">Peripheral membrane protein</topology>
        <orientation evidence="1">Cytoplasmic side</orientation>
    </subcellularLocation>
</comment>
<comment type="similarity">
    <text evidence="1">Belongs to the glycosyltransferase 28 family. MurG subfamily.</text>
</comment>
<protein>
    <recommendedName>
        <fullName evidence="1">UDP-N-acetylglucosamine--N-acetylmuramyl-(pentapeptide) pyrophosphoryl-undecaprenol N-acetylglucosamine transferase</fullName>
        <ecNumber evidence="1">2.4.1.227</ecNumber>
    </recommendedName>
    <alternativeName>
        <fullName evidence="1">Undecaprenyl-PP-MurNAc-pentapeptide-UDPGlcNAc GlcNAc transferase</fullName>
    </alternativeName>
</protein>
<dbReference type="EC" id="2.4.1.227" evidence="1"/>
<dbReference type="EMBL" id="CP001139">
    <property type="protein sequence ID" value="ACH66140.1"/>
    <property type="molecule type" value="Genomic_DNA"/>
</dbReference>
<dbReference type="RefSeq" id="WP_012533522.1">
    <property type="nucleotide sequence ID" value="NC_011184.1"/>
</dbReference>
<dbReference type="SMR" id="B5FB35"/>
<dbReference type="CAZy" id="GT28">
    <property type="family name" value="Glycosyltransferase Family 28"/>
</dbReference>
<dbReference type="KEGG" id="vfm:VFMJ11_2313"/>
<dbReference type="HOGENOM" id="CLU_037404_2_0_6"/>
<dbReference type="UniPathway" id="UPA00219"/>
<dbReference type="Proteomes" id="UP000001857">
    <property type="component" value="Chromosome I"/>
</dbReference>
<dbReference type="GO" id="GO:0005886">
    <property type="term" value="C:plasma membrane"/>
    <property type="evidence" value="ECO:0007669"/>
    <property type="project" value="UniProtKB-SubCell"/>
</dbReference>
<dbReference type="GO" id="GO:0051991">
    <property type="term" value="F:UDP-N-acetyl-D-glucosamine:N-acetylmuramoyl-L-alanyl-D-glutamyl-meso-2,6-diaminopimelyl-D-alanyl-D-alanine-diphosphoundecaprenol 4-beta-N-acetylglucosaminlytransferase activity"/>
    <property type="evidence" value="ECO:0007669"/>
    <property type="project" value="RHEA"/>
</dbReference>
<dbReference type="GO" id="GO:0050511">
    <property type="term" value="F:undecaprenyldiphospho-muramoylpentapeptide beta-N-acetylglucosaminyltransferase activity"/>
    <property type="evidence" value="ECO:0007669"/>
    <property type="project" value="UniProtKB-UniRule"/>
</dbReference>
<dbReference type="GO" id="GO:0005975">
    <property type="term" value="P:carbohydrate metabolic process"/>
    <property type="evidence" value="ECO:0007669"/>
    <property type="project" value="InterPro"/>
</dbReference>
<dbReference type="GO" id="GO:0051301">
    <property type="term" value="P:cell division"/>
    <property type="evidence" value="ECO:0007669"/>
    <property type="project" value="UniProtKB-KW"/>
</dbReference>
<dbReference type="GO" id="GO:0071555">
    <property type="term" value="P:cell wall organization"/>
    <property type="evidence" value="ECO:0007669"/>
    <property type="project" value="UniProtKB-KW"/>
</dbReference>
<dbReference type="GO" id="GO:0030259">
    <property type="term" value="P:lipid glycosylation"/>
    <property type="evidence" value="ECO:0007669"/>
    <property type="project" value="UniProtKB-UniRule"/>
</dbReference>
<dbReference type="GO" id="GO:0009252">
    <property type="term" value="P:peptidoglycan biosynthetic process"/>
    <property type="evidence" value="ECO:0007669"/>
    <property type="project" value="UniProtKB-UniRule"/>
</dbReference>
<dbReference type="GO" id="GO:0008360">
    <property type="term" value="P:regulation of cell shape"/>
    <property type="evidence" value="ECO:0007669"/>
    <property type="project" value="UniProtKB-KW"/>
</dbReference>
<dbReference type="CDD" id="cd03785">
    <property type="entry name" value="GT28_MurG"/>
    <property type="match status" value="1"/>
</dbReference>
<dbReference type="Gene3D" id="3.40.50.2000">
    <property type="entry name" value="Glycogen Phosphorylase B"/>
    <property type="match status" value="2"/>
</dbReference>
<dbReference type="HAMAP" id="MF_00033">
    <property type="entry name" value="MurG"/>
    <property type="match status" value="1"/>
</dbReference>
<dbReference type="InterPro" id="IPR006009">
    <property type="entry name" value="GlcNAc_MurG"/>
</dbReference>
<dbReference type="InterPro" id="IPR007235">
    <property type="entry name" value="Glyco_trans_28_C"/>
</dbReference>
<dbReference type="InterPro" id="IPR004276">
    <property type="entry name" value="GlycoTrans_28_N"/>
</dbReference>
<dbReference type="NCBIfam" id="TIGR01133">
    <property type="entry name" value="murG"/>
    <property type="match status" value="1"/>
</dbReference>
<dbReference type="PANTHER" id="PTHR21015:SF22">
    <property type="entry name" value="GLYCOSYLTRANSFERASE"/>
    <property type="match status" value="1"/>
</dbReference>
<dbReference type="PANTHER" id="PTHR21015">
    <property type="entry name" value="UDP-N-ACETYLGLUCOSAMINE--N-ACETYLMURAMYL-(PENTAPEPTIDE) PYROPHOSPHORYL-UNDECAPRENOL N-ACETYLGLUCOSAMINE TRANSFERASE 1"/>
    <property type="match status" value="1"/>
</dbReference>
<dbReference type="Pfam" id="PF04101">
    <property type="entry name" value="Glyco_tran_28_C"/>
    <property type="match status" value="1"/>
</dbReference>
<dbReference type="Pfam" id="PF03033">
    <property type="entry name" value="Glyco_transf_28"/>
    <property type="match status" value="1"/>
</dbReference>
<dbReference type="SUPFAM" id="SSF53756">
    <property type="entry name" value="UDP-Glycosyltransferase/glycogen phosphorylase"/>
    <property type="match status" value="1"/>
</dbReference>
<name>MURG_ALIFM</name>
<feature type="chain" id="PRO_1000090486" description="UDP-N-acetylglucosamine--N-acetylmuramyl-(pentapeptide) pyrophosphoryl-undecaprenol N-acetylglucosamine transferase">
    <location>
        <begin position="1"/>
        <end position="354"/>
    </location>
</feature>
<feature type="binding site" evidence="1">
    <location>
        <begin position="15"/>
        <end position="17"/>
    </location>
    <ligand>
        <name>UDP-N-acetyl-alpha-D-glucosamine</name>
        <dbReference type="ChEBI" id="CHEBI:57705"/>
    </ligand>
</feature>
<feature type="binding site" evidence="1">
    <location>
        <position position="127"/>
    </location>
    <ligand>
        <name>UDP-N-acetyl-alpha-D-glucosamine</name>
        <dbReference type="ChEBI" id="CHEBI:57705"/>
    </ligand>
</feature>
<feature type="binding site" evidence="1">
    <location>
        <position position="163"/>
    </location>
    <ligand>
        <name>UDP-N-acetyl-alpha-D-glucosamine</name>
        <dbReference type="ChEBI" id="CHEBI:57705"/>
    </ligand>
</feature>
<feature type="binding site" evidence="1">
    <location>
        <position position="191"/>
    </location>
    <ligand>
        <name>UDP-N-acetyl-alpha-D-glucosamine</name>
        <dbReference type="ChEBI" id="CHEBI:57705"/>
    </ligand>
</feature>
<feature type="binding site" evidence="1">
    <location>
        <position position="244"/>
    </location>
    <ligand>
        <name>UDP-N-acetyl-alpha-D-glucosamine</name>
        <dbReference type="ChEBI" id="CHEBI:57705"/>
    </ligand>
</feature>
<feature type="binding site" evidence="1">
    <location>
        <begin position="263"/>
        <end position="268"/>
    </location>
    <ligand>
        <name>UDP-N-acetyl-alpha-D-glucosamine</name>
        <dbReference type="ChEBI" id="CHEBI:57705"/>
    </ligand>
</feature>
<feature type="binding site" evidence="1">
    <location>
        <position position="288"/>
    </location>
    <ligand>
        <name>UDP-N-acetyl-alpha-D-glucosamine</name>
        <dbReference type="ChEBI" id="CHEBI:57705"/>
    </ligand>
</feature>
<proteinExistence type="inferred from homology"/>
<evidence type="ECO:0000255" key="1">
    <source>
        <dbReference type="HAMAP-Rule" id="MF_00033"/>
    </source>
</evidence>
<gene>
    <name evidence="1" type="primary">murG</name>
    <name type="ordered locus">VFMJ11_2313</name>
</gene>